<keyword id="KW-0238">DNA-binding</keyword>
<keyword id="KW-0539">Nucleus</keyword>
<keyword id="KW-1185">Reference proteome</keyword>
<keyword id="KW-0677">Repeat</keyword>
<keyword id="KW-0804">Transcription</keyword>
<keyword id="KW-0805">Transcription regulation</keyword>
<proteinExistence type="evidence at transcript level"/>
<dbReference type="EMBL" id="AY519599">
    <property type="protein sequence ID" value="AAS10069.1"/>
    <property type="molecule type" value="mRNA"/>
</dbReference>
<dbReference type="EMBL" id="AL132958">
    <property type="protein sequence ID" value="CAB64223.1"/>
    <property type="molecule type" value="Genomic_DNA"/>
</dbReference>
<dbReference type="EMBL" id="CP002686">
    <property type="protein sequence ID" value="AEE79047.1"/>
    <property type="molecule type" value="Genomic_DNA"/>
</dbReference>
<dbReference type="EMBL" id="AK117256">
    <property type="protein sequence ID" value="BAC41931.1"/>
    <property type="molecule type" value="mRNA"/>
</dbReference>
<dbReference type="EMBL" id="BT005257">
    <property type="protein sequence ID" value="AAO63321.1"/>
    <property type="molecule type" value="mRNA"/>
</dbReference>
<dbReference type="EMBL" id="AF062871">
    <property type="protein sequence ID" value="AAC83593.1"/>
    <property type="molecule type" value="mRNA"/>
</dbReference>
<dbReference type="PIR" id="T46166">
    <property type="entry name" value="T46166"/>
</dbReference>
<dbReference type="PIR" id="T51643">
    <property type="entry name" value="T51643"/>
</dbReference>
<dbReference type="RefSeq" id="NP_566980.1">
    <property type="nucleotide sequence ID" value="NM_115180.3"/>
</dbReference>
<dbReference type="SMR" id="Q9SCP1"/>
<dbReference type="IntAct" id="Q9SCP1">
    <property type="interactions" value="1"/>
</dbReference>
<dbReference type="STRING" id="3702.Q9SCP1"/>
<dbReference type="PaxDb" id="3702-AT3G53200.1"/>
<dbReference type="EnsemblPlants" id="AT3G53200.1">
    <property type="protein sequence ID" value="AT3G53200.1"/>
    <property type="gene ID" value="AT3G53200"/>
</dbReference>
<dbReference type="GeneID" id="824486"/>
<dbReference type="Gramene" id="AT3G53200.1">
    <property type="protein sequence ID" value="AT3G53200.1"/>
    <property type="gene ID" value="AT3G53200"/>
</dbReference>
<dbReference type="KEGG" id="ath:AT3G53200"/>
<dbReference type="Araport" id="AT3G53200"/>
<dbReference type="TAIR" id="AT3G53200">
    <property type="gene designation" value="MYB27"/>
</dbReference>
<dbReference type="eggNOG" id="KOG0048">
    <property type="taxonomic scope" value="Eukaryota"/>
</dbReference>
<dbReference type="HOGENOM" id="CLU_028567_8_3_1"/>
<dbReference type="InParanoid" id="Q9SCP1"/>
<dbReference type="OMA" id="SAKETNC"/>
<dbReference type="OrthoDB" id="2143914at2759"/>
<dbReference type="PhylomeDB" id="Q9SCP1"/>
<dbReference type="PRO" id="PR:Q9SCP1"/>
<dbReference type="Proteomes" id="UP000006548">
    <property type="component" value="Chromosome 3"/>
</dbReference>
<dbReference type="ExpressionAtlas" id="Q9SCP1">
    <property type="expression patterns" value="baseline and differential"/>
</dbReference>
<dbReference type="GO" id="GO:0005634">
    <property type="term" value="C:nucleus"/>
    <property type="evidence" value="ECO:0007669"/>
    <property type="project" value="UniProtKB-SubCell"/>
</dbReference>
<dbReference type="GO" id="GO:0003700">
    <property type="term" value="F:DNA-binding transcription factor activity"/>
    <property type="evidence" value="ECO:0000250"/>
    <property type="project" value="TAIR"/>
</dbReference>
<dbReference type="GO" id="GO:0043565">
    <property type="term" value="F:sequence-specific DNA binding"/>
    <property type="evidence" value="ECO:0007669"/>
    <property type="project" value="InterPro"/>
</dbReference>
<dbReference type="GO" id="GO:0009646">
    <property type="term" value="P:response to absence of light"/>
    <property type="evidence" value="ECO:0000270"/>
    <property type="project" value="UniProtKB"/>
</dbReference>
<dbReference type="CDD" id="cd00167">
    <property type="entry name" value="SANT"/>
    <property type="match status" value="2"/>
</dbReference>
<dbReference type="FunFam" id="1.10.10.60:FF:000741">
    <property type="match status" value="1"/>
</dbReference>
<dbReference type="FunFam" id="1.10.10.60:FF:000011">
    <property type="entry name" value="Myb transcription factor"/>
    <property type="match status" value="1"/>
</dbReference>
<dbReference type="Gene3D" id="1.10.10.60">
    <property type="entry name" value="Homeodomain-like"/>
    <property type="match status" value="2"/>
</dbReference>
<dbReference type="InterPro" id="IPR044676">
    <property type="entry name" value="EOBI/EOBII-like_plant"/>
</dbReference>
<dbReference type="InterPro" id="IPR009057">
    <property type="entry name" value="Homeodomain-like_sf"/>
</dbReference>
<dbReference type="InterPro" id="IPR017930">
    <property type="entry name" value="Myb_dom"/>
</dbReference>
<dbReference type="InterPro" id="IPR001005">
    <property type="entry name" value="SANT/Myb"/>
</dbReference>
<dbReference type="PANTHER" id="PTHR45675">
    <property type="entry name" value="MYB TRANSCRIPTION FACTOR-RELATED-RELATED"/>
    <property type="match status" value="1"/>
</dbReference>
<dbReference type="PANTHER" id="PTHR45675:SF8">
    <property type="entry name" value="TRANSCRIPTION FACTOR MYB27"/>
    <property type="match status" value="1"/>
</dbReference>
<dbReference type="Pfam" id="PF00249">
    <property type="entry name" value="Myb_DNA-binding"/>
    <property type="match status" value="2"/>
</dbReference>
<dbReference type="SMART" id="SM00717">
    <property type="entry name" value="SANT"/>
    <property type="match status" value="2"/>
</dbReference>
<dbReference type="SUPFAM" id="SSF46689">
    <property type="entry name" value="Homeodomain-like"/>
    <property type="match status" value="1"/>
</dbReference>
<dbReference type="PROSITE" id="PS51294">
    <property type="entry name" value="HTH_MYB"/>
    <property type="match status" value="2"/>
</dbReference>
<sequence length="238" mass="27996">MDFKKEETLRRGPWLEEEDERLVKVISLLGERRWDSLAIVSGLKRSGKSCRLRWMNYLNPTLKRGPMSQEEERIIFQLHALWGNKWSKIARRLPGRTDNEIKNYWRTHYRKKQEAQNYGKLFEWRGNTGEELLHKYKETEITRTKTTSQEHGFVEVVSMESGKEANGGVGGRESFGVMKSPYENRISDWISEISTDQSEANLSEDHSSNSCSENNINIGTWWFQETRDFEEFSCSLWS</sequence>
<gene>
    <name evidence="4" type="primary">MYB27</name>
    <name evidence="5" type="ordered locus">At3g53200</name>
    <name evidence="6" type="ORF">T4D2.130</name>
</gene>
<accession>Q9SCP1</accession>
<accession>Q9ZTE8</accession>
<feature type="chain" id="PRO_0000438965" description="Transcription factor MYB27">
    <location>
        <begin position="1"/>
        <end position="238"/>
    </location>
</feature>
<feature type="domain" description="HTH myb-type 1" evidence="1">
    <location>
        <begin position="6"/>
        <end position="58"/>
    </location>
</feature>
<feature type="domain" description="HTH myb-type 2" evidence="1">
    <location>
        <begin position="59"/>
        <end position="113"/>
    </location>
</feature>
<feature type="DNA-binding region" description="H-T-H motif" evidence="1">
    <location>
        <begin position="34"/>
        <end position="58"/>
    </location>
</feature>
<feature type="DNA-binding region" description="H-T-H motif" evidence="1">
    <location>
        <begin position="86"/>
        <end position="109"/>
    </location>
</feature>
<feature type="short sequence motif" description="Nuclear localization signal" evidence="2">
    <location>
        <begin position="31"/>
        <end position="38"/>
    </location>
</feature>
<reference key="1">
    <citation type="submission" date="2004-01" db="EMBL/GenBank/DDBJ databases">
        <title>The MYB transcription factor family in Arabidopsis: A genome-wide cloning and expression pattern analysis.</title>
        <authorList>
            <person name="Qu L."/>
            <person name="Gu H."/>
        </authorList>
    </citation>
    <scope>NUCLEOTIDE SEQUENCE [MRNA]</scope>
</reference>
<reference key="2">
    <citation type="journal article" date="2000" name="Nature">
        <title>Sequence and analysis of chromosome 3 of the plant Arabidopsis thaliana.</title>
        <authorList>
            <person name="Salanoubat M."/>
            <person name="Lemcke K."/>
            <person name="Rieger M."/>
            <person name="Ansorge W."/>
            <person name="Unseld M."/>
            <person name="Fartmann B."/>
            <person name="Valle G."/>
            <person name="Bloecker H."/>
            <person name="Perez-Alonso M."/>
            <person name="Obermaier B."/>
            <person name="Delseny M."/>
            <person name="Boutry M."/>
            <person name="Grivell L.A."/>
            <person name="Mache R."/>
            <person name="Puigdomenech P."/>
            <person name="De Simone V."/>
            <person name="Choisne N."/>
            <person name="Artiguenave F."/>
            <person name="Robert C."/>
            <person name="Brottier P."/>
            <person name="Wincker P."/>
            <person name="Cattolico L."/>
            <person name="Weissenbach J."/>
            <person name="Saurin W."/>
            <person name="Quetier F."/>
            <person name="Schaefer M."/>
            <person name="Mueller-Auer S."/>
            <person name="Gabel C."/>
            <person name="Fuchs M."/>
            <person name="Benes V."/>
            <person name="Wurmbach E."/>
            <person name="Drzonek H."/>
            <person name="Erfle H."/>
            <person name="Jordan N."/>
            <person name="Bangert S."/>
            <person name="Wiedelmann R."/>
            <person name="Kranz H."/>
            <person name="Voss H."/>
            <person name="Holland R."/>
            <person name="Brandt P."/>
            <person name="Nyakatura G."/>
            <person name="Vezzi A."/>
            <person name="D'Angelo M."/>
            <person name="Pallavicini A."/>
            <person name="Toppo S."/>
            <person name="Simionati B."/>
            <person name="Conrad A."/>
            <person name="Hornischer K."/>
            <person name="Kauer G."/>
            <person name="Loehnert T.-H."/>
            <person name="Nordsiek G."/>
            <person name="Reichelt J."/>
            <person name="Scharfe M."/>
            <person name="Schoen O."/>
            <person name="Bargues M."/>
            <person name="Terol J."/>
            <person name="Climent J."/>
            <person name="Navarro P."/>
            <person name="Collado C."/>
            <person name="Perez-Perez A."/>
            <person name="Ottenwaelder B."/>
            <person name="Duchemin D."/>
            <person name="Cooke R."/>
            <person name="Laudie M."/>
            <person name="Berger-Llauro C."/>
            <person name="Purnelle B."/>
            <person name="Masuy D."/>
            <person name="de Haan M."/>
            <person name="Maarse A.C."/>
            <person name="Alcaraz J.-P."/>
            <person name="Cottet A."/>
            <person name="Casacuberta E."/>
            <person name="Monfort A."/>
            <person name="Argiriou A."/>
            <person name="Flores M."/>
            <person name="Liguori R."/>
            <person name="Vitale D."/>
            <person name="Mannhaupt G."/>
            <person name="Haase D."/>
            <person name="Schoof H."/>
            <person name="Rudd S."/>
            <person name="Zaccaria P."/>
            <person name="Mewes H.-W."/>
            <person name="Mayer K.F.X."/>
            <person name="Kaul S."/>
            <person name="Town C.D."/>
            <person name="Koo H.L."/>
            <person name="Tallon L.J."/>
            <person name="Jenkins J."/>
            <person name="Rooney T."/>
            <person name="Rizzo M."/>
            <person name="Walts A."/>
            <person name="Utterback T."/>
            <person name="Fujii C.Y."/>
            <person name="Shea T.P."/>
            <person name="Creasy T.H."/>
            <person name="Haas B."/>
            <person name="Maiti R."/>
            <person name="Wu D."/>
            <person name="Peterson J."/>
            <person name="Van Aken S."/>
            <person name="Pai G."/>
            <person name="Militscher J."/>
            <person name="Sellers P."/>
            <person name="Gill J.E."/>
            <person name="Feldblyum T.V."/>
            <person name="Preuss D."/>
            <person name="Lin X."/>
            <person name="Nierman W.C."/>
            <person name="Salzberg S.L."/>
            <person name="White O."/>
            <person name="Venter J.C."/>
            <person name="Fraser C.M."/>
            <person name="Kaneko T."/>
            <person name="Nakamura Y."/>
            <person name="Sato S."/>
            <person name="Kato T."/>
            <person name="Asamizu E."/>
            <person name="Sasamoto S."/>
            <person name="Kimura T."/>
            <person name="Idesawa K."/>
            <person name="Kawashima K."/>
            <person name="Kishida Y."/>
            <person name="Kiyokawa C."/>
            <person name="Kohara M."/>
            <person name="Matsumoto M."/>
            <person name="Matsuno A."/>
            <person name="Muraki A."/>
            <person name="Nakayama S."/>
            <person name="Nakazaki N."/>
            <person name="Shinpo S."/>
            <person name="Takeuchi C."/>
            <person name="Wada T."/>
            <person name="Watanabe A."/>
            <person name="Yamada M."/>
            <person name="Yasuda M."/>
            <person name="Tabata S."/>
        </authorList>
    </citation>
    <scope>NUCLEOTIDE SEQUENCE [LARGE SCALE GENOMIC DNA]</scope>
    <source>
        <strain>cv. Columbia</strain>
    </source>
</reference>
<reference key="3">
    <citation type="journal article" date="2017" name="Plant J.">
        <title>Araport11: a complete reannotation of the Arabidopsis thaliana reference genome.</title>
        <authorList>
            <person name="Cheng C.Y."/>
            <person name="Krishnakumar V."/>
            <person name="Chan A.P."/>
            <person name="Thibaud-Nissen F."/>
            <person name="Schobel S."/>
            <person name="Town C.D."/>
        </authorList>
    </citation>
    <scope>GENOME REANNOTATION</scope>
    <source>
        <strain>cv. Columbia</strain>
    </source>
</reference>
<reference key="4">
    <citation type="journal article" date="2002" name="Science">
        <title>Functional annotation of a full-length Arabidopsis cDNA collection.</title>
        <authorList>
            <person name="Seki M."/>
            <person name="Narusaka M."/>
            <person name="Kamiya A."/>
            <person name="Ishida J."/>
            <person name="Satou M."/>
            <person name="Sakurai T."/>
            <person name="Nakajima M."/>
            <person name="Enju A."/>
            <person name="Akiyama K."/>
            <person name="Oono Y."/>
            <person name="Muramatsu M."/>
            <person name="Hayashizaki Y."/>
            <person name="Kawai J."/>
            <person name="Carninci P."/>
            <person name="Itoh M."/>
            <person name="Ishii Y."/>
            <person name="Arakawa T."/>
            <person name="Shibata K."/>
            <person name="Shinagawa A."/>
            <person name="Shinozaki K."/>
        </authorList>
    </citation>
    <scope>NUCLEOTIDE SEQUENCE [LARGE SCALE MRNA]</scope>
    <source>
        <strain>cv. Columbia</strain>
    </source>
</reference>
<reference key="5">
    <citation type="journal article" date="2003" name="Science">
        <title>Empirical analysis of transcriptional activity in the Arabidopsis genome.</title>
        <authorList>
            <person name="Yamada K."/>
            <person name="Lim J."/>
            <person name="Dale J.M."/>
            <person name="Chen H."/>
            <person name="Shinn P."/>
            <person name="Palm C.J."/>
            <person name="Southwick A.M."/>
            <person name="Wu H.C."/>
            <person name="Kim C.J."/>
            <person name="Nguyen M."/>
            <person name="Pham P.K."/>
            <person name="Cheuk R.F."/>
            <person name="Karlin-Newmann G."/>
            <person name="Liu S.X."/>
            <person name="Lam B."/>
            <person name="Sakano H."/>
            <person name="Wu T."/>
            <person name="Yu G."/>
            <person name="Miranda M."/>
            <person name="Quach H.L."/>
            <person name="Tripp M."/>
            <person name="Chang C.H."/>
            <person name="Lee J.M."/>
            <person name="Toriumi M.J."/>
            <person name="Chan M.M."/>
            <person name="Tang C.C."/>
            <person name="Onodera C.S."/>
            <person name="Deng J.M."/>
            <person name="Akiyama K."/>
            <person name="Ansari Y."/>
            <person name="Arakawa T."/>
            <person name="Banh J."/>
            <person name="Banno F."/>
            <person name="Bowser L."/>
            <person name="Brooks S.Y."/>
            <person name="Carninci P."/>
            <person name="Chao Q."/>
            <person name="Choy N."/>
            <person name="Enju A."/>
            <person name="Goldsmith A.D."/>
            <person name="Gurjal M."/>
            <person name="Hansen N.F."/>
            <person name="Hayashizaki Y."/>
            <person name="Johnson-Hopson C."/>
            <person name="Hsuan V.W."/>
            <person name="Iida K."/>
            <person name="Karnes M."/>
            <person name="Khan S."/>
            <person name="Koesema E."/>
            <person name="Ishida J."/>
            <person name="Jiang P.X."/>
            <person name="Jones T."/>
            <person name="Kawai J."/>
            <person name="Kamiya A."/>
            <person name="Meyers C."/>
            <person name="Nakajima M."/>
            <person name="Narusaka M."/>
            <person name="Seki M."/>
            <person name="Sakurai T."/>
            <person name="Satou M."/>
            <person name="Tamse R."/>
            <person name="Vaysberg M."/>
            <person name="Wallender E.K."/>
            <person name="Wong C."/>
            <person name="Yamamura Y."/>
            <person name="Yuan S."/>
            <person name="Shinozaki K."/>
            <person name="Davis R.W."/>
            <person name="Theologis A."/>
            <person name="Ecker J.R."/>
        </authorList>
    </citation>
    <scope>NUCLEOTIDE SEQUENCE [LARGE SCALE MRNA]</scope>
    <source>
        <strain>cv. Columbia</strain>
    </source>
</reference>
<reference key="6">
    <citation type="journal article" date="1998" name="Plant J.">
        <title>Towards functional characterisation of the members of the R2R3-MYB gene family from Arabidopsis thaliana.</title>
        <authorList>
            <person name="Kranz H.D."/>
            <person name="Denekamp M."/>
            <person name="Greco R."/>
            <person name="Jin H.-L."/>
            <person name="Leyva A."/>
            <person name="Meissner R.C."/>
            <person name="Petroni K."/>
            <person name="Urzainqui A."/>
            <person name="Bevan M."/>
            <person name="Martin C."/>
            <person name="Smeekens S."/>
            <person name="Tonelli C."/>
            <person name="Paz-Ares J."/>
            <person name="Weisshaar B."/>
        </authorList>
    </citation>
    <scope>NUCLEOTIDE SEQUENCE [MRNA] OF 73-238</scope>
    <scope>INDUCTION BY DARKNESS</scope>
    <scope>GENE FAMILY</scope>
    <scope>NOMENCLATURE</scope>
    <source>
        <strain>cv. Columbia</strain>
    </source>
</reference>
<reference key="7">
    <citation type="journal article" date="2001" name="Curr. Opin. Plant Biol.">
        <title>The R2R3-MYB gene family in Arabidopsis thaliana.</title>
        <authorList>
            <person name="Stracke R."/>
            <person name="Werber M."/>
            <person name="Weisshaar B."/>
        </authorList>
    </citation>
    <scope>GENE FAMILY</scope>
    <scope>NOMENCLATURE</scope>
</reference>
<reference key="8">
    <citation type="journal article" date="2006" name="Plant Mol. Biol.">
        <title>The MYB transcription factor superfamily of Arabidopsis: expression analysis and phylogenetic comparison with the rice MYB family.</title>
        <authorList>
            <person name="Chen Y."/>
            <person name="Yang X."/>
            <person name="He K."/>
            <person name="Liu M."/>
            <person name="Li J."/>
            <person name="Gao Z."/>
            <person name="Lin Z."/>
            <person name="Zhang Y."/>
            <person name="Wang X."/>
            <person name="Qiu X."/>
            <person name="Shen Y."/>
            <person name="Zhang L."/>
            <person name="Deng X."/>
            <person name="Luo J."/>
            <person name="Deng X.-W."/>
            <person name="Chen Z."/>
            <person name="Gu H."/>
            <person name="Qu L.-J."/>
        </authorList>
    </citation>
    <scope>GENE FAMILY</scope>
</reference>
<evidence type="ECO:0000255" key="1">
    <source>
        <dbReference type="PROSITE-ProRule" id="PRU00625"/>
    </source>
</evidence>
<evidence type="ECO:0000255" key="2">
    <source>
        <dbReference type="PROSITE-ProRule" id="PRU00768"/>
    </source>
</evidence>
<evidence type="ECO:0000269" key="3">
    <source>
    </source>
</evidence>
<evidence type="ECO:0000303" key="4">
    <source>
    </source>
</evidence>
<evidence type="ECO:0000312" key="5">
    <source>
        <dbReference type="Araport" id="AT3G53200"/>
    </source>
</evidence>
<evidence type="ECO:0000312" key="6">
    <source>
        <dbReference type="EMBL" id="CAB64223.1"/>
    </source>
</evidence>
<organism>
    <name type="scientific">Arabidopsis thaliana</name>
    <name type="common">Mouse-ear cress</name>
    <dbReference type="NCBI Taxonomy" id="3702"/>
    <lineage>
        <taxon>Eukaryota</taxon>
        <taxon>Viridiplantae</taxon>
        <taxon>Streptophyta</taxon>
        <taxon>Embryophyta</taxon>
        <taxon>Tracheophyta</taxon>
        <taxon>Spermatophyta</taxon>
        <taxon>Magnoliopsida</taxon>
        <taxon>eudicotyledons</taxon>
        <taxon>Gunneridae</taxon>
        <taxon>Pentapetalae</taxon>
        <taxon>rosids</taxon>
        <taxon>malvids</taxon>
        <taxon>Brassicales</taxon>
        <taxon>Brassicaceae</taxon>
        <taxon>Camelineae</taxon>
        <taxon>Arabidopsis</taxon>
    </lineage>
</organism>
<protein>
    <recommendedName>
        <fullName evidence="4">Transcription factor MYB27</fullName>
    </recommendedName>
    <alternativeName>
        <fullName evidence="4">Myb-related protein 27</fullName>
        <shortName evidence="4">AtMYB27</shortName>
    </alternativeName>
</protein>
<name>MYB27_ARATH</name>
<comment type="subcellular location">
    <subcellularLocation>
        <location evidence="1 2">Nucleus</location>
    </subcellularLocation>
</comment>
<comment type="induction">
    <text evidence="3">Accumulates in etiolated seedlings in dark conditions.</text>
</comment>